<proteinExistence type="evidence at protein level"/>
<reference key="1">
    <citation type="submission" date="2005-02" db="EMBL/GenBank/DDBJ databases">
        <title>Cloning and Identification of MRE11 Homologs in Rice (Oryza sativa L.).</title>
        <authorList>
            <person name="Hong J.-P."/>
            <person name="Kim W."/>
        </authorList>
    </citation>
    <scope>NUCLEOTIDE SEQUENCE [MRNA]</scope>
</reference>
<reference key="2">
    <citation type="journal article" date="2002" name="Nature">
        <title>Sequence and analysis of rice chromosome 4.</title>
        <authorList>
            <person name="Feng Q."/>
            <person name="Zhang Y."/>
            <person name="Hao P."/>
            <person name="Wang S."/>
            <person name="Fu G."/>
            <person name="Huang Y."/>
            <person name="Li Y."/>
            <person name="Zhu J."/>
            <person name="Liu Y."/>
            <person name="Hu X."/>
            <person name="Jia P."/>
            <person name="Zhang Y."/>
            <person name="Zhao Q."/>
            <person name="Ying K."/>
            <person name="Yu S."/>
            <person name="Tang Y."/>
            <person name="Weng Q."/>
            <person name="Zhang L."/>
            <person name="Lu Y."/>
            <person name="Mu J."/>
            <person name="Lu Y."/>
            <person name="Zhang L.S."/>
            <person name="Yu Z."/>
            <person name="Fan D."/>
            <person name="Liu X."/>
            <person name="Lu T."/>
            <person name="Li C."/>
            <person name="Wu Y."/>
            <person name="Sun T."/>
            <person name="Lei H."/>
            <person name="Li T."/>
            <person name="Hu H."/>
            <person name="Guan J."/>
            <person name="Wu M."/>
            <person name="Zhang R."/>
            <person name="Zhou B."/>
            <person name="Chen Z."/>
            <person name="Chen L."/>
            <person name="Jin Z."/>
            <person name="Wang R."/>
            <person name="Yin H."/>
            <person name="Cai Z."/>
            <person name="Ren S."/>
            <person name="Lv G."/>
            <person name="Gu W."/>
            <person name="Zhu G."/>
            <person name="Tu Y."/>
            <person name="Jia J."/>
            <person name="Zhang Y."/>
            <person name="Chen J."/>
            <person name="Kang H."/>
            <person name="Chen X."/>
            <person name="Shao C."/>
            <person name="Sun Y."/>
            <person name="Hu Q."/>
            <person name="Zhang X."/>
            <person name="Zhang W."/>
            <person name="Wang L."/>
            <person name="Ding C."/>
            <person name="Sheng H."/>
            <person name="Gu J."/>
            <person name="Chen S."/>
            <person name="Ni L."/>
            <person name="Zhu F."/>
            <person name="Chen W."/>
            <person name="Lan L."/>
            <person name="Lai Y."/>
            <person name="Cheng Z."/>
            <person name="Gu M."/>
            <person name="Jiang J."/>
            <person name="Li J."/>
            <person name="Hong G."/>
            <person name="Xue Y."/>
            <person name="Han B."/>
        </authorList>
    </citation>
    <scope>NUCLEOTIDE SEQUENCE [LARGE SCALE GENOMIC DNA]</scope>
    <source>
        <strain>cv. Nipponbare</strain>
    </source>
</reference>
<reference key="3">
    <citation type="journal article" date="2005" name="Nature">
        <title>The map-based sequence of the rice genome.</title>
        <authorList>
            <consortium name="International rice genome sequencing project (IRGSP)"/>
        </authorList>
    </citation>
    <scope>NUCLEOTIDE SEQUENCE [LARGE SCALE GENOMIC DNA]</scope>
    <source>
        <strain>cv. Nipponbare</strain>
    </source>
</reference>
<reference key="4">
    <citation type="journal article" date="2008" name="Nucleic Acids Res.">
        <title>The rice annotation project database (RAP-DB): 2008 update.</title>
        <authorList>
            <consortium name="The rice annotation project (RAP)"/>
        </authorList>
    </citation>
    <scope>GENOME REANNOTATION</scope>
    <source>
        <strain>cv. Nipponbare</strain>
    </source>
</reference>
<reference key="5">
    <citation type="journal article" date="2013" name="Rice">
        <title>Improvement of the Oryza sativa Nipponbare reference genome using next generation sequence and optical map data.</title>
        <authorList>
            <person name="Kawahara Y."/>
            <person name="de la Bastide M."/>
            <person name="Hamilton J.P."/>
            <person name="Kanamori H."/>
            <person name="McCombie W.R."/>
            <person name="Ouyang S."/>
            <person name="Schwartz D.C."/>
            <person name="Tanaka T."/>
            <person name="Wu J."/>
            <person name="Zhou S."/>
            <person name="Childs K.L."/>
            <person name="Davidson R.M."/>
            <person name="Lin H."/>
            <person name="Quesada-Ocampo L."/>
            <person name="Vaillancourt B."/>
            <person name="Sakai H."/>
            <person name="Lee S.S."/>
            <person name="Kim J."/>
            <person name="Numa H."/>
            <person name="Itoh T."/>
            <person name="Buell C.R."/>
            <person name="Matsumoto T."/>
        </authorList>
    </citation>
    <scope>GENOME REANNOTATION</scope>
    <source>
        <strain>cv. Nipponbare</strain>
    </source>
</reference>
<reference key="6">
    <citation type="journal article" date="2005" name="PLoS Biol.">
        <title>The genomes of Oryza sativa: a history of duplications.</title>
        <authorList>
            <person name="Yu J."/>
            <person name="Wang J."/>
            <person name="Lin W."/>
            <person name="Li S."/>
            <person name="Li H."/>
            <person name="Zhou J."/>
            <person name="Ni P."/>
            <person name="Dong W."/>
            <person name="Hu S."/>
            <person name="Zeng C."/>
            <person name="Zhang J."/>
            <person name="Zhang Y."/>
            <person name="Li R."/>
            <person name="Xu Z."/>
            <person name="Li S."/>
            <person name="Li X."/>
            <person name="Zheng H."/>
            <person name="Cong L."/>
            <person name="Lin L."/>
            <person name="Yin J."/>
            <person name="Geng J."/>
            <person name="Li G."/>
            <person name="Shi J."/>
            <person name="Liu J."/>
            <person name="Lv H."/>
            <person name="Li J."/>
            <person name="Wang J."/>
            <person name="Deng Y."/>
            <person name="Ran L."/>
            <person name="Shi X."/>
            <person name="Wang X."/>
            <person name="Wu Q."/>
            <person name="Li C."/>
            <person name="Ren X."/>
            <person name="Wang J."/>
            <person name="Wang X."/>
            <person name="Li D."/>
            <person name="Liu D."/>
            <person name="Zhang X."/>
            <person name="Ji Z."/>
            <person name="Zhao W."/>
            <person name="Sun Y."/>
            <person name="Zhang Z."/>
            <person name="Bao J."/>
            <person name="Han Y."/>
            <person name="Dong L."/>
            <person name="Ji J."/>
            <person name="Chen P."/>
            <person name="Wu S."/>
            <person name="Liu J."/>
            <person name="Xiao Y."/>
            <person name="Bu D."/>
            <person name="Tan J."/>
            <person name="Yang L."/>
            <person name="Ye C."/>
            <person name="Zhang J."/>
            <person name="Xu J."/>
            <person name="Zhou Y."/>
            <person name="Yu Y."/>
            <person name="Zhang B."/>
            <person name="Zhuang S."/>
            <person name="Wei H."/>
            <person name="Liu B."/>
            <person name="Lei M."/>
            <person name="Yu H."/>
            <person name="Li Y."/>
            <person name="Xu H."/>
            <person name="Wei S."/>
            <person name="He X."/>
            <person name="Fang L."/>
            <person name="Zhang Z."/>
            <person name="Zhang Y."/>
            <person name="Huang X."/>
            <person name="Su Z."/>
            <person name="Tong W."/>
            <person name="Li J."/>
            <person name="Tong Z."/>
            <person name="Li S."/>
            <person name="Ye J."/>
            <person name="Wang L."/>
            <person name="Fang L."/>
            <person name="Lei T."/>
            <person name="Chen C.-S."/>
            <person name="Chen H.-C."/>
            <person name="Xu Z."/>
            <person name="Li H."/>
            <person name="Huang H."/>
            <person name="Zhang F."/>
            <person name="Xu H."/>
            <person name="Li N."/>
            <person name="Zhao C."/>
            <person name="Li S."/>
            <person name="Dong L."/>
            <person name="Huang Y."/>
            <person name="Li L."/>
            <person name="Xi Y."/>
            <person name="Qi Q."/>
            <person name="Li W."/>
            <person name="Zhang B."/>
            <person name="Hu W."/>
            <person name="Zhang Y."/>
            <person name="Tian X."/>
            <person name="Jiao Y."/>
            <person name="Liang X."/>
            <person name="Jin J."/>
            <person name="Gao L."/>
            <person name="Zheng W."/>
            <person name="Hao B."/>
            <person name="Liu S.-M."/>
            <person name="Wang W."/>
            <person name="Yuan L."/>
            <person name="Cao M."/>
            <person name="McDermott J."/>
            <person name="Samudrala R."/>
            <person name="Wang J."/>
            <person name="Wong G.K.-S."/>
            <person name="Yang H."/>
        </authorList>
    </citation>
    <scope>NUCLEOTIDE SEQUENCE [LARGE SCALE GENOMIC DNA]</scope>
    <source>
        <strain>cv. Nipponbare</strain>
    </source>
</reference>
<reference key="7">
    <citation type="journal article" date="2007" name="Biochem. Biophys. Res. Commun.">
        <title>Characterization of the plant homolog of Nijmegen breakage syndrome 1: Involvement in DNA repair and recombination.</title>
        <authorList>
            <person name="Akutsu N."/>
            <person name="Iijima K."/>
            <person name="Hinata T."/>
            <person name="Tauchi H."/>
        </authorList>
    </citation>
    <scope>INTERACTION WITH NBS1</scope>
</reference>
<keyword id="KW-0158">Chromosome</keyword>
<keyword id="KW-0227">DNA damage</keyword>
<keyword id="KW-0234">DNA repair</keyword>
<keyword id="KW-0255">Endonuclease</keyword>
<keyword id="KW-0269">Exonuclease</keyword>
<keyword id="KW-0378">Hydrolase</keyword>
<keyword id="KW-0464">Manganese</keyword>
<keyword id="KW-0469">Meiosis</keyword>
<keyword id="KW-0479">Metal-binding</keyword>
<keyword id="KW-0540">Nuclease</keyword>
<keyword id="KW-0539">Nucleus</keyword>
<keyword id="KW-1185">Reference proteome</keyword>
<organism evidence="10">
    <name type="scientific">Oryza sativa subsp. japonica</name>
    <name type="common">Rice</name>
    <dbReference type="NCBI Taxonomy" id="39947"/>
    <lineage>
        <taxon>Eukaryota</taxon>
        <taxon>Viridiplantae</taxon>
        <taxon>Streptophyta</taxon>
        <taxon>Embryophyta</taxon>
        <taxon>Tracheophyta</taxon>
        <taxon>Spermatophyta</taxon>
        <taxon>Magnoliopsida</taxon>
        <taxon>Liliopsida</taxon>
        <taxon>Poales</taxon>
        <taxon>Poaceae</taxon>
        <taxon>BOP clade</taxon>
        <taxon>Oryzoideae</taxon>
        <taxon>Oryzeae</taxon>
        <taxon>Oryzinae</taxon>
        <taxon>Oryza</taxon>
        <taxon>Oryza sativa</taxon>
    </lineage>
</organism>
<protein>
    <recommendedName>
        <fullName evidence="4">Double-strand break repair protein MRE11</fullName>
        <shortName>OsMre11</shortName>
    </recommendedName>
</protein>
<accession>Q7XQR9</accession>
<accession>A0A0P0WF86</accession>
<accession>B9FCQ9</accession>
<accession>Q5BMA8</accession>
<feature type="chain" id="PRO_0000430942" description="Double-strand break repair protein MRE11">
    <location>
        <begin position="1"/>
        <end position="705"/>
    </location>
</feature>
<feature type="region of interest" description="Disordered" evidence="3">
    <location>
        <begin position="505"/>
        <end position="705"/>
    </location>
</feature>
<feature type="compositionally biased region" description="Basic and acidic residues" evidence="3">
    <location>
        <begin position="505"/>
        <end position="514"/>
    </location>
</feature>
<feature type="compositionally biased region" description="Polar residues" evidence="3">
    <location>
        <begin position="515"/>
        <end position="538"/>
    </location>
</feature>
<feature type="compositionally biased region" description="Polar residues" evidence="3">
    <location>
        <begin position="589"/>
        <end position="605"/>
    </location>
</feature>
<feature type="compositionally biased region" description="Basic residues" evidence="3">
    <location>
        <begin position="641"/>
        <end position="663"/>
    </location>
</feature>
<feature type="active site" description="Proton donor" evidence="2">
    <location>
        <position position="123"/>
    </location>
</feature>
<feature type="binding site" evidence="2">
    <location>
        <position position="15"/>
    </location>
    <ligand>
        <name>Mn(2+)</name>
        <dbReference type="ChEBI" id="CHEBI:29035"/>
        <label>1</label>
    </ligand>
</feature>
<feature type="binding site" evidence="2">
    <location>
        <position position="17"/>
    </location>
    <ligand>
        <name>Mn(2+)</name>
        <dbReference type="ChEBI" id="CHEBI:29035"/>
        <label>1</label>
    </ligand>
</feature>
<feature type="binding site" evidence="2">
    <location>
        <position position="55"/>
    </location>
    <ligand>
        <name>Mn(2+)</name>
        <dbReference type="ChEBI" id="CHEBI:29035"/>
        <label>1</label>
    </ligand>
</feature>
<feature type="binding site" evidence="2">
    <location>
        <position position="55"/>
    </location>
    <ligand>
        <name>Mn(2+)</name>
        <dbReference type="ChEBI" id="CHEBI:29035"/>
        <label>2</label>
    </ligand>
</feature>
<feature type="binding site" evidence="2">
    <location>
        <position position="122"/>
    </location>
    <ligand>
        <name>Mn(2+)</name>
        <dbReference type="ChEBI" id="CHEBI:29035"/>
        <label>2</label>
    </ligand>
</feature>
<feature type="binding site" evidence="2">
    <location>
        <position position="220"/>
    </location>
    <ligand>
        <name>Mn(2+)</name>
        <dbReference type="ChEBI" id="CHEBI:29035"/>
        <label>2</label>
    </ligand>
</feature>
<feature type="binding site" evidence="2">
    <location>
        <position position="248"/>
    </location>
    <ligand>
        <name>Mn(2+)</name>
        <dbReference type="ChEBI" id="CHEBI:29035"/>
        <label>2</label>
    </ligand>
</feature>
<feature type="binding site" evidence="2">
    <location>
        <position position="250"/>
    </location>
    <ligand>
        <name>Mn(2+)</name>
        <dbReference type="ChEBI" id="CHEBI:29035"/>
        <label>1</label>
    </ligand>
</feature>
<feature type="sequence conflict" description="In Ref. 1; AAX24126." ref="1">
    <original>M</original>
    <variation>MQ</variation>
    <location>
        <position position="1"/>
    </location>
</feature>
<feature type="sequence conflict" description="In Ref. 6; EEE61764." ref="6">
    <original>M</original>
    <variation>R</variation>
    <location>
        <position position="1"/>
    </location>
</feature>
<feature type="sequence conflict" description="In Ref. 1; AAX24126." ref="1">
    <original>S</original>
    <variation>P</variation>
    <location>
        <position position="40"/>
    </location>
</feature>
<feature type="sequence conflict" description="In Ref. 6; EEE61764." ref="6">
    <original>L</original>
    <variation>LV</variation>
    <location>
        <position position="522"/>
    </location>
</feature>
<feature type="sequence conflict" description="In Ref. 1; AAX24126." ref="1">
    <original>R</original>
    <variation>T</variation>
    <location>
        <position position="705"/>
    </location>
</feature>
<evidence type="ECO:0000250" key="1">
    <source>
        <dbReference type="UniProtKB" id="P49959"/>
    </source>
</evidence>
<evidence type="ECO:0000250" key="2">
    <source>
        <dbReference type="UniProtKB" id="Q8U1N9"/>
    </source>
</evidence>
<evidence type="ECO:0000256" key="3">
    <source>
        <dbReference type="SAM" id="MobiDB-lite"/>
    </source>
</evidence>
<evidence type="ECO:0000305" key="4"/>
<evidence type="ECO:0000305" key="5">
    <source>
    </source>
</evidence>
<evidence type="ECO:0000312" key="6">
    <source>
        <dbReference type="EMBL" id="AAX24126.1"/>
    </source>
</evidence>
<evidence type="ECO:0000312" key="7">
    <source>
        <dbReference type="EMBL" id="BAF15926.1"/>
    </source>
</evidence>
<evidence type="ECO:0000312" key="8">
    <source>
        <dbReference type="EMBL" id="CAE03009.2"/>
    </source>
</evidence>
<evidence type="ECO:0000312" key="9">
    <source>
        <dbReference type="EMBL" id="EEE61764.1"/>
    </source>
</evidence>
<evidence type="ECO:0000312" key="10">
    <source>
        <dbReference type="Proteomes" id="UP000059680"/>
    </source>
</evidence>
<dbReference type="EMBL" id="AY935255">
    <property type="protein sequence ID" value="AAX24126.1"/>
    <property type="molecule type" value="mRNA"/>
</dbReference>
<dbReference type="EMBL" id="AL606444">
    <property type="protein sequence ID" value="CAE03009.2"/>
    <property type="molecule type" value="Genomic_DNA"/>
</dbReference>
<dbReference type="EMBL" id="AP008210">
    <property type="protein sequence ID" value="BAF15926.1"/>
    <property type="molecule type" value="Genomic_DNA"/>
</dbReference>
<dbReference type="EMBL" id="AP014960">
    <property type="protein sequence ID" value="BAS91212.1"/>
    <property type="molecule type" value="Genomic_DNA"/>
</dbReference>
<dbReference type="EMBL" id="CM000141">
    <property type="protein sequence ID" value="EEE61764.1"/>
    <property type="status" value="ALT_INIT"/>
    <property type="molecule type" value="Genomic_DNA"/>
</dbReference>
<dbReference type="RefSeq" id="XP_015635669.1">
    <property type="nucleotide sequence ID" value="XM_015780183.1"/>
</dbReference>
<dbReference type="SMR" id="Q7XQR9"/>
<dbReference type="FunCoup" id="Q7XQR9">
    <property type="interactions" value="2235"/>
</dbReference>
<dbReference type="STRING" id="39947.Q7XQR9"/>
<dbReference type="PaxDb" id="39947-Q7XQR9"/>
<dbReference type="EnsemblPlants" id="Os04t0635900-01">
    <property type="protein sequence ID" value="Os04t0635900-01"/>
    <property type="gene ID" value="Os04g0635900"/>
</dbReference>
<dbReference type="Gramene" id="Os04t0635900-01">
    <property type="protein sequence ID" value="Os04t0635900-01"/>
    <property type="gene ID" value="Os04g0635900"/>
</dbReference>
<dbReference type="KEGG" id="dosa:Os04g0635900"/>
<dbReference type="eggNOG" id="KOG2310">
    <property type="taxonomic scope" value="Eukaryota"/>
</dbReference>
<dbReference type="HOGENOM" id="CLU_009535_3_2_1"/>
<dbReference type="InParanoid" id="Q7XQR9"/>
<dbReference type="OMA" id="ESCMFNA"/>
<dbReference type="OrthoDB" id="30417at2759"/>
<dbReference type="Proteomes" id="UP000000763">
    <property type="component" value="Chromosome 4"/>
</dbReference>
<dbReference type="Proteomes" id="UP000007752">
    <property type="component" value="Chromosome 4"/>
</dbReference>
<dbReference type="Proteomes" id="UP000059680">
    <property type="component" value="Chromosome 4"/>
</dbReference>
<dbReference type="GO" id="GO:0030870">
    <property type="term" value="C:Mre11 complex"/>
    <property type="evidence" value="ECO:0000318"/>
    <property type="project" value="GO_Central"/>
</dbReference>
<dbReference type="GO" id="GO:0035861">
    <property type="term" value="C:site of double-strand break"/>
    <property type="evidence" value="ECO:0000318"/>
    <property type="project" value="GO_Central"/>
</dbReference>
<dbReference type="GO" id="GO:0008296">
    <property type="term" value="F:3'-5'-DNA exonuclease activity"/>
    <property type="evidence" value="ECO:0007669"/>
    <property type="project" value="InterPro"/>
</dbReference>
<dbReference type="GO" id="GO:0030145">
    <property type="term" value="F:manganese ion binding"/>
    <property type="evidence" value="ECO:0007669"/>
    <property type="project" value="InterPro"/>
</dbReference>
<dbReference type="GO" id="GO:0000014">
    <property type="term" value="F:single-stranded DNA endodeoxyribonuclease activity"/>
    <property type="evidence" value="ECO:0000318"/>
    <property type="project" value="GO_Central"/>
</dbReference>
<dbReference type="GO" id="GO:0000724">
    <property type="term" value="P:double-strand break repair via homologous recombination"/>
    <property type="evidence" value="ECO:0000318"/>
    <property type="project" value="GO_Central"/>
</dbReference>
<dbReference type="GO" id="GO:0006303">
    <property type="term" value="P:double-strand break repair via nonhomologous end joining"/>
    <property type="evidence" value="ECO:0000318"/>
    <property type="project" value="GO_Central"/>
</dbReference>
<dbReference type="GO" id="GO:0042138">
    <property type="term" value="P:meiotic DNA double-strand break formation"/>
    <property type="evidence" value="ECO:0000318"/>
    <property type="project" value="GO_Central"/>
</dbReference>
<dbReference type="GO" id="GO:0097552">
    <property type="term" value="P:mitochondrial double-strand break repair via homologous recombination"/>
    <property type="evidence" value="ECO:0000318"/>
    <property type="project" value="GO_Central"/>
</dbReference>
<dbReference type="GO" id="GO:0007095">
    <property type="term" value="P:mitotic G2 DNA damage checkpoint signaling"/>
    <property type="evidence" value="ECO:0000318"/>
    <property type="project" value="GO_Central"/>
</dbReference>
<dbReference type="GO" id="GO:0000723">
    <property type="term" value="P:telomere maintenance"/>
    <property type="evidence" value="ECO:0000318"/>
    <property type="project" value="GO_Central"/>
</dbReference>
<dbReference type="CDD" id="cd00840">
    <property type="entry name" value="MPP_Mre11_N"/>
    <property type="match status" value="1"/>
</dbReference>
<dbReference type="FunFam" id="3.30.110.110:FF:000002">
    <property type="entry name" value="Double-strand break repair protein"/>
    <property type="match status" value="1"/>
</dbReference>
<dbReference type="FunFam" id="3.60.21.10:FF:000019">
    <property type="entry name" value="Double-strand break repair protein"/>
    <property type="match status" value="1"/>
</dbReference>
<dbReference type="Gene3D" id="3.60.21.10">
    <property type="match status" value="1"/>
</dbReference>
<dbReference type="Gene3D" id="3.30.110.110">
    <property type="entry name" value="Mre11, capping domain"/>
    <property type="match status" value="1"/>
</dbReference>
<dbReference type="InterPro" id="IPR004843">
    <property type="entry name" value="Calcineurin-like_PHP_ApaH"/>
</dbReference>
<dbReference type="InterPro" id="IPR029052">
    <property type="entry name" value="Metallo-depent_PP-like"/>
</dbReference>
<dbReference type="InterPro" id="IPR003701">
    <property type="entry name" value="Mre11"/>
</dbReference>
<dbReference type="InterPro" id="IPR038487">
    <property type="entry name" value="Mre11_capping_dom"/>
</dbReference>
<dbReference type="InterPro" id="IPR007281">
    <property type="entry name" value="Mre11_DNA-bd"/>
</dbReference>
<dbReference type="InterPro" id="IPR041796">
    <property type="entry name" value="Mre11_N"/>
</dbReference>
<dbReference type="NCBIfam" id="TIGR00583">
    <property type="entry name" value="mre11"/>
    <property type="match status" value="1"/>
</dbReference>
<dbReference type="PANTHER" id="PTHR10139">
    <property type="entry name" value="DOUBLE-STRAND BREAK REPAIR PROTEIN MRE11"/>
    <property type="match status" value="1"/>
</dbReference>
<dbReference type="PANTHER" id="PTHR10139:SF1">
    <property type="entry name" value="DOUBLE-STRAND BREAK REPAIR PROTEIN MRE11"/>
    <property type="match status" value="1"/>
</dbReference>
<dbReference type="Pfam" id="PF00149">
    <property type="entry name" value="Metallophos"/>
    <property type="match status" value="1"/>
</dbReference>
<dbReference type="Pfam" id="PF04152">
    <property type="entry name" value="Mre11_DNA_bind"/>
    <property type="match status" value="1"/>
</dbReference>
<dbReference type="PIRSF" id="PIRSF000882">
    <property type="entry name" value="DSB_repair_MRE11"/>
    <property type="match status" value="1"/>
</dbReference>
<dbReference type="SMART" id="SM01347">
    <property type="entry name" value="Mre11_DNA_bind"/>
    <property type="match status" value="1"/>
</dbReference>
<dbReference type="SUPFAM" id="SSF56300">
    <property type="entry name" value="Metallo-dependent phosphatases"/>
    <property type="match status" value="1"/>
</dbReference>
<name>MRE11_ORYSJ</name>
<comment type="function">
    <text evidence="1">Core component of the MRN complex, which plays a central role in double-strand break (DSB) repair, DNA recombination, maintenance of telomere integrity and meiosis. The MRN complex is involved in the repair of DNA double-strand breaks (DSBs) via homologous recombination (HR), an error-free mechanism which primarily occurs during S and G2 phases. The complex (1) mediates the end resection of damaged DNA, which generates proper single-stranded DNA, a key initial steps in HR, and is (2) required for the recruitment of other repair factors and efficient activation of ATM and ATR upon DNA damage. Within the MRN complex, MRE11 possesses both single-strand endonuclease activity and double-strand-specific 3'-5' exonuclease activity. MRE11 first endonucleolytically cleaves the 5' strand at DNA DSB ends to prevent non-homologous end joining (NHEJ) and licence HR. It then generates a single-stranded DNA gap via 3' to 5' exonucleolytic degradation, which is required for single-strand invasion and recombination.</text>
</comment>
<comment type="cofactor">
    <cofactor evidence="2">
        <name>Mn(2+)</name>
        <dbReference type="ChEBI" id="CHEBI:29035"/>
    </cofactor>
    <text evidence="2">Binds 2 manganese ions per subunit.</text>
</comment>
<comment type="subunit">
    <text evidence="5">Component of the MRN complex composed of two heterodimers RAD50/MRE11 associated with a single NBS1.</text>
</comment>
<comment type="subcellular location">
    <subcellularLocation>
        <location evidence="1">Nucleus</location>
    </subcellularLocation>
    <subcellularLocation>
        <location evidence="1">Chromosome</location>
    </subcellularLocation>
    <text evidence="1">Localizes to DNA double-strand breaks (DSBs).</text>
</comment>
<comment type="similarity">
    <text evidence="4">Belongs to the MRE11/RAD32 family.</text>
</comment>
<comment type="sequence caution" evidence="4">
    <conflict type="erroneous initiation">
        <sequence resource="EMBL-CDS" id="EEE61764"/>
    </conflict>
    <text>Truncated N-terminus.</text>
</comment>
<gene>
    <name evidence="6" type="primary">MRE11</name>
    <name evidence="7" type="ordered locus">Os04g0635900</name>
    <name evidence="9" type="ORF">OsJ_16317</name>
    <name evidence="8" type="ORF">OSJNBa0043L09.28</name>
</gene>
<sequence>MGDESNTLRVLVATDCHLGYMEKDEIRRFDSFEAFEEICSLAEQNKVDFVLLGGDLFHENKPSRSTLVKTIEILRRYCLNDQPVKFQVVSDQTINFPNRFGQVNYEDPNFNVGLPVFTIHGNHDDPAGVDNLSAIDILSACNLVNYFGKMDLGGSGVGEIAVYPVLVKKGTTFVALYGLGNIRDERLNRMFQTPHAVQWMRPETQDGMSVSDWFNILVLHQNRIKTNPKSAINEHFLPRFLDFIVWGHEHECLIDPQEVPGMGFHITQPGSSVATSLIDGEAKPKHVLLLEIKGNQYRPTKIPLRSVRPFHYAEVVLKDEVDVDPNDQASVLEHLDKIVRNLIKKSSQPTASRPETKLPLIRIKVDYSGFSTINPQRFGQKYVGKVANPQDILIFSKSAKKRQTTGVGNIDDSEKLRPEELNQQTIEALVAENNLKMEILPVDDLDIALHDFVSKDDKMAFYACLQRNLEETRTKLNSEADKFKIEEEDIIVKVGECMQERVKERSLRSKEDSRFTSSSQNLDTGGRSVTAQSNLNSFSDDEDTREMLLGARTTNAGRKASGFTRPSKDATDVAKTGTSRRGRGRGTASMKQTTLNFSQSRSSAAIRSEEVQSSSDEENETNEANEVVESSEPEESPQQTGRKRAAPRGGRGRGRGATAKRGRKADISSIQSMLMSKDDDDDDEDDRPKKPPPRVTRNYGAVRRR</sequence>